<keyword id="KW-0997">Cell inner membrane</keyword>
<keyword id="KW-1003">Cell membrane</keyword>
<keyword id="KW-0407">Ion channel</keyword>
<keyword id="KW-0406">Ion transport</keyword>
<keyword id="KW-0472">Membrane</keyword>
<keyword id="KW-0479">Metal-binding</keyword>
<keyword id="KW-0915">Sodium</keyword>
<keyword id="KW-0812">Transmembrane</keyword>
<keyword id="KW-1133">Transmembrane helix</keyword>
<keyword id="KW-0813">Transport</keyword>
<proteinExistence type="inferred from homology"/>
<sequence>MLQLLLAVFIGGGTGSVARWMLSMRFNPLHQAIPIGTLTANLLGAFIIGMGFAWFNRMTHIDPMWKVLITTGFCGGLTTFSTFSAEVVFLLQEGRFGWALLNVLINLLGSFAMTALAFWLFSAAAAR</sequence>
<evidence type="ECO:0000255" key="1">
    <source>
        <dbReference type="HAMAP-Rule" id="MF_00454"/>
    </source>
</evidence>
<organism>
    <name type="scientific">Salmonella enteritidis PT4 (strain P125109)</name>
    <dbReference type="NCBI Taxonomy" id="550537"/>
    <lineage>
        <taxon>Bacteria</taxon>
        <taxon>Pseudomonadati</taxon>
        <taxon>Pseudomonadota</taxon>
        <taxon>Gammaproteobacteria</taxon>
        <taxon>Enterobacterales</taxon>
        <taxon>Enterobacteriaceae</taxon>
        <taxon>Salmonella</taxon>
    </lineage>
</organism>
<gene>
    <name evidence="1" type="primary">fluC</name>
    <name evidence="1" type="synonym">crcB</name>
    <name type="ordered locus">SEN0599</name>
</gene>
<feature type="chain" id="PRO_1000125152" description="Fluoride-specific ion channel FluC">
    <location>
        <begin position="1"/>
        <end position="127"/>
    </location>
</feature>
<feature type="transmembrane region" description="Helical" evidence="1">
    <location>
        <begin position="4"/>
        <end position="24"/>
    </location>
</feature>
<feature type="transmembrane region" description="Helical" evidence="1">
    <location>
        <begin position="35"/>
        <end position="55"/>
    </location>
</feature>
<feature type="transmembrane region" description="Helical" evidence="1">
    <location>
        <begin position="71"/>
        <end position="91"/>
    </location>
</feature>
<feature type="transmembrane region" description="Helical" evidence="1">
    <location>
        <begin position="103"/>
        <end position="123"/>
    </location>
</feature>
<feature type="binding site" evidence="1">
    <location>
        <position position="75"/>
    </location>
    <ligand>
        <name>Na(+)</name>
        <dbReference type="ChEBI" id="CHEBI:29101"/>
        <note>structural</note>
    </ligand>
</feature>
<feature type="binding site" evidence="1">
    <location>
        <position position="78"/>
    </location>
    <ligand>
        <name>Na(+)</name>
        <dbReference type="ChEBI" id="CHEBI:29101"/>
        <note>structural</note>
    </ligand>
</feature>
<accession>B5QVN1</accession>
<protein>
    <recommendedName>
        <fullName evidence="1">Fluoride-specific ion channel FluC</fullName>
    </recommendedName>
</protein>
<dbReference type="EMBL" id="AM933172">
    <property type="protein sequence ID" value="CAR32187.1"/>
    <property type="molecule type" value="Genomic_DNA"/>
</dbReference>
<dbReference type="RefSeq" id="WP_000939753.1">
    <property type="nucleotide sequence ID" value="NC_011294.1"/>
</dbReference>
<dbReference type="SMR" id="B5QVN1"/>
<dbReference type="KEGG" id="set:SEN0599"/>
<dbReference type="HOGENOM" id="CLU_114342_3_3_6"/>
<dbReference type="Proteomes" id="UP000000613">
    <property type="component" value="Chromosome"/>
</dbReference>
<dbReference type="GO" id="GO:0005886">
    <property type="term" value="C:plasma membrane"/>
    <property type="evidence" value="ECO:0007669"/>
    <property type="project" value="UniProtKB-SubCell"/>
</dbReference>
<dbReference type="GO" id="GO:0062054">
    <property type="term" value="F:fluoride channel activity"/>
    <property type="evidence" value="ECO:0007669"/>
    <property type="project" value="UniProtKB-UniRule"/>
</dbReference>
<dbReference type="GO" id="GO:0046872">
    <property type="term" value="F:metal ion binding"/>
    <property type="evidence" value="ECO:0007669"/>
    <property type="project" value="UniProtKB-KW"/>
</dbReference>
<dbReference type="GO" id="GO:0140114">
    <property type="term" value="P:cellular detoxification of fluoride"/>
    <property type="evidence" value="ECO:0007669"/>
    <property type="project" value="UniProtKB-UniRule"/>
</dbReference>
<dbReference type="HAMAP" id="MF_00454">
    <property type="entry name" value="FluC"/>
    <property type="match status" value="1"/>
</dbReference>
<dbReference type="InterPro" id="IPR003691">
    <property type="entry name" value="FluC"/>
</dbReference>
<dbReference type="NCBIfam" id="TIGR00494">
    <property type="entry name" value="crcB"/>
    <property type="match status" value="1"/>
</dbReference>
<dbReference type="NCBIfam" id="NF010792">
    <property type="entry name" value="PRK14196.1"/>
    <property type="match status" value="1"/>
</dbReference>
<dbReference type="PANTHER" id="PTHR28259">
    <property type="entry name" value="FLUORIDE EXPORT PROTEIN 1-RELATED"/>
    <property type="match status" value="1"/>
</dbReference>
<dbReference type="PANTHER" id="PTHR28259:SF1">
    <property type="entry name" value="FLUORIDE EXPORT PROTEIN 1-RELATED"/>
    <property type="match status" value="1"/>
</dbReference>
<dbReference type="Pfam" id="PF02537">
    <property type="entry name" value="CRCB"/>
    <property type="match status" value="1"/>
</dbReference>
<reference key="1">
    <citation type="journal article" date="2008" name="Genome Res.">
        <title>Comparative genome analysis of Salmonella enteritidis PT4 and Salmonella gallinarum 287/91 provides insights into evolutionary and host adaptation pathways.</title>
        <authorList>
            <person name="Thomson N.R."/>
            <person name="Clayton D.J."/>
            <person name="Windhorst D."/>
            <person name="Vernikos G."/>
            <person name="Davidson S."/>
            <person name="Churcher C."/>
            <person name="Quail M.A."/>
            <person name="Stevens M."/>
            <person name="Jones M.A."/>
            <person name="Watson M."/>
            <person name="Barron A."/>
            <person name="Layton A."/>
            <person name="Pickard D."/>
            <person name="Kingsley R.A."/>
            <person name="Bignell A."/>
            <person name="Clark L."/>
            <person name="Harris B."/>
            <person name="Ormond D."/>
            <person name="Abdellah Z."/>
            <person name="Brooks K."/>
            <person name="Cherevach I."/>
            <person name="Chillingworth T."/>
            <person name="Woodward J."/>
            <person name="Norberczak H."/>
            <person name="Lord A."/>
            <person name="Arrowsmith C."/>
            <person name="Jagels K."/>
            <person name="Moule S."/>
            <person name="Mungall K."/>
            <person name="Saunders M."/>
            <person name="Whitehead S."/>
            <person name="Chabalgoity J.A."/>
            <person name="Maskell D."/>
            <person name="Humphreys T."/>
            <person name="Roberts M."/>
            <person name="Barrow P.A."/>
            <person name="Dougan G."/>
            <person name="Parkhill J."/>
        </authorList>
    </citation>
    <scope>NUCLEOTIDE SEQUENCE [LARGE SCALE GENOMIC DNA]</scope>
    <source>
        <strain>P125109</strain>
    </source>
</reference>
<comment type="function">
    <text evidence="1">Fluoride-specific ion channel. Important for reducing fluoride concentration in the cell, thus reducing its toxicity.</text>
</comment>
<comment type="catalytic activity">
    <reaction evidence="1">
        <text>fluoride(in) = fluoride(out)</text>
        <dbReference type="Rhea" id="RHEA:76159"/>
        <dbReference type="ChEBI" id="CHEBI:17051"/>
    </reaction>
    <physiologicalReaction direction="left-to-right" evidence="1">
        <dbReference type="Rhea" id="RHEA:76160"/>
    </physiologicalReaction>
</comment>
<comment type="activity regulation">
    <text evidence="1">Na(+) is not transported, but it plays an essential structural role and its presence is essential for fluoride channel function.</text>
</comment>
<comment type="subcellular location">
    <subcellularLocation>
        <location evidence="1">Cell inner membrane</location>
        <topology evidence="1">Multi-pass membrane protein</topology>
    </subcellularLocation>
</comment>
<comment type="similarity">
    <text evidence="1">Belongs to the fluoride channel Fluc/FEX (TC 1.A.43) family.</text>
</comment>
<name>FLUC_SALEP</name>